<keyword id="KW-1003">Cell membrane</keyword>
<keyword id="KW-0472">Membrane</keyword>
<keyword id="KW-1185">Reference proteome</keyword>
<keyword id="KW-0812">Transmembrane</keyword>
<keyword id="KW-1133">Transmembrane helix</keyword>
<protein>
    <recommendedName>
        <fullName>Uncharacterized protein AF_1524</fullName>
    </recommendedName>
</protein>
<comment type="subcellular location">
    <subcellularLocation>
        <location evidence="2">Cell membrane</location>
        <topology evidence="2">Multi-pass membrane protein</topology>
    </subcellularLocation>
</comment>
<feature type="chain" id="PRO_0000128017" description="Uncharacterized protein AF_1524">
    <location>
        <begin position="1"/>
        <end position="83"/>
    </location>
</feature>
<feature type="transmembrane region" description="Helical" evidence="1">
    <location>
        <begin position="7"/>
        <end position="26"/>
    </location>
</feature>
<feature type="transmembrane region" description="Helical" evidence="1">
    <location>
        <begin position="36"/>
        <end position="58"/>
    </location>
</feature>
<feature type="transmembrane region" description="Helical" evidence="1">
    <location>
        <begin position="65"/>
        <end position="82"/>
    </location>
</feature>
<reference key="1">
    <citation type="journal article" date="1997" name="Nature">
        <title>The complete genome sequence of the hyperthermophilic, sulphate-reducing archaeon Archaeoglobus fulgidus.</title>
        <authorList>
            <person name="Klenk H.-P."/>
            <person name="Clayton R.A."/>
            <person name="Tomb J.-F."/>
            <person name="White O."/>
            <person name="Nelson K.E."/>
            <person name="Ketchum K.A."/>
            <person name="Dodson R.J."/>
            <person name="Gwinn M.L."/>
            <person name="Hickey E.K."/>
            <person name="Peterson J.D."/>
            <person name="Richardson D.L."/>
            <person name="Kerlavage A.R."/>
            <person name="Graham D.E."/>
            <person name="Kyrpides N.C."/>
            <person name="Fleischmann R.D."/>
            <person name="Quackenbush J."/>
            <person name="Lee N.H."/>
            <person name="Sutton G.G."/>
            <person name="Gill S.R."/>
            <person name="Kirkness E.F."/>
            <person name="Dougherty B.A."/>
            <person name="McKenney K."/>
            <person name="Adams M.D."/>
            <person name="Loftus B.J."/>
            <person name="Peterson S.N."/>
            <person name="Reich C.I."/>
            <person name="McNeil L.K."/>
            <person name="Badger J.H."/>
            <person name="Glodek A."/>
            <person name="Zhou L."/>
            <person name="Overbeek R."/>
            <person name="Gocayne J.D."/>
            <person name="Weidman J.F."/>
            <person name="McDonald L.A."/>
            <person name="Utterback T.R."/>
            <person name="Cotton M.D."/>
            <person name="Spriggs T."/>
            <person name="Artiach P."/>
            <person name="Kaine B.P."/>
            <person name="Sykes S.M."/>
            <person name="Sadow P.W."/>
            <person name="D'Andrea K.P."/>
            <person name="Bowman C."/>
            <person name="Fujii C."/>
            <person name="Garland S.A."/>
            <person name="Mason T.M."/>
            <person name="Olsen G.J."/>
            <person name="Fraser C.M."/>
            <person name="Smith H.O."/>
            <person name="Woese C.R."/>
            <person name="Venter J.C."/>
        </authorList>
    </citation>
    <scope>NUCLEOTIDE SEQUENCE [LARGE SCALE GENOMIC DNA]</scope>
    <source>
        <strain>ATCC 49558 / DSM 4304 / JCM 9628 / NBRC 100126 / VC-16</strain>
    </source>
</reference>
<gene>
    <name type="ordered locus">AF_1524</name>
</gene>
<proteinExistence type="predicted"/>
<organism>
    <name type="scientific">Archaeoglobus fulgidus (strain ATCC 49558 / DSM 4304 / JCM 9628 / NBRC 100126 / VC-16)</name>
    <dbReference type="NCBI Taxonomy" id="224325"/>
    <lineage>
        <taxon>Archaea</taxon>
        <taxon>Methanobacteriati</taxon>
        <taxon>Methanobacteriota</taxon>
        <taxon>Archaeoglobi</taxon>
        <taxon>Archaeoglobales</taxon>
        <taxon>Archaeoglobaceae</taxon>
        <taxon>Archaeoglobus</taxon>
    </lineage>
</organism>
<evidence type="ECO:0000255" key="1"/>
<evidence type="ECO:0000305" key="2"/>
<sequence>MREDRLFARFVEYSFFAVFAALIVSYALDKLFGTSLSPLLVFLLTLIPAIGLILILPFSSRKTAILTVAVLIEMAVALYLAFR</sequence>
<dbReference type="EMBL" id="AE000782">
    <property type="protein sequence ID" value="AAB89734.1"/>
    <property type="molecule type" value="Genomic_DNA"/>
</dbReference>
<dbReference type="PIR" id="C69440">
    <property type="entry name" value="C69440"/>
</dbReference>
<dbReference type="RefSeq" id="WP_010879021.1">
    <property type="nucleotide sequence ID" value="NC_000917.1"/>
</dbReference>
<dbReference type="SMR" id="O28748"/>
<dbReference type="STRING" id="224325.AF_1524"/>
<dbReference type="PaxDb" id="224325-AF_1524"/>
<dbReference type="EnsemblBacteria" id="AAB89734">
    <property type="protein sequence ID" value="AAB89734"/>
    <property type="gene ID" value="AF_1524"/>
</dbReference>
<dbReference type="KEGG" id="afu:AF_1524"/>
<dbReference type="HOGENOM" id="CLU_2534481_0_0_2"/>
<dbReference type="Proteomes" id="UP000002199">
    <property type="component" value="Chromosome"/>
</dbReference>
<dbReference type="GO" id="GO:0005886">
    <property type="term" value="C:plasma membrane"/>
    <property type="evidence" value="ECO:0007669"/>
    <property type="project" value="UniProtKB-SubCell"/>
</dbReference>
<accession>O28748</accession>
<name>Y1524_ARCFU</name>